<name>ARV1_ARATH</name>
<reference key="1">
    <citation type="journal article" date="2006" name="Biochim. Biophys. Acta">
        <title>Arabidopsis thaliana expresses two functional isoforms of Arvp, a protein involved in the regulation of cellular lipid homeostasis.</title>
        <authorList>
            <person name="Fores O."/>
            <person name="Arro M."/>
            <person name="Pahissa A."/>
            <person name="Ferrero S."/>
            <person name="Germann M."/>
            <person name="Stukey J."/>
            <person name="McDonough V."/>
            <person name="Nickels J.T. Jr."/>
            <person name="Campos N."/>
            <person name="Ferrer A."/>
        </authorList>
    </citation>
    <scope>NUCLEOTIDE SEQUENCE [MRNA] (ISOFORM 1)</scope>
    <scope>FUNCTION</scope>
    <scope>SUBCELLULAR LOCATION</scope>
    <scope>TISSUE SPECIFICITY</scope>
    <scope>DEVELOPMENTAL STAGE</scope>
    <source>
        <strain>cv. Col-3</strain>
    </source>
</reference>
<reference key="2">
    <citation type="journal article" date="2000" name="Nature">
        <title>Sequence and analysis of chromosome 1 of the plant Arabidopsis thaliana.</title>
        <authorList>
            <person name="Theologis A."/>
            <person name="Ecker J.R."/>
            <person name="Palm C.J."/>
            <person name="Federspiel N.A."/>
            <person name="Kaul S."/>
            <person name="White O."/>
            <person name="Alonso J."/>
            <person name="Altafi H."/>
            <person name="Araujo R."/>
            <person name="Bowman C.L."/>
            <person name="Brooks S.Y."/>
            <person name="Buehler E."/>
            <person name="Chan A."/>
            <person name="Chao Q."/>
            <person name="Chen H."/>
            <person name="Cheuk R.F."/>
            <person name="Chin C.W."/>
            <person name="Chung M.K."/>
            <person name="Conn L."/>
            <person name="Conway A.B."/>
            <person name="Conway A.R."/>
            <person name="Creasy T.H."/>
            <person name="Dewar K."/>
            <person name="Dunn P."/>
            <person name="Etgu P."/>
            <person name="Feldblyum T.V."/>
            <person name="Feng J.-D."/>
            <person name="Fong B."/>
            <person name="Fujii C.Y."/>
            <person name="Gill J.E."/>
            <person name="Goldsmith A.D."/>
            <person name="Haas B."/>
            <person name="Hansen N.F."/>
            <person name="Hughes B."/>
            <person name="Huizar L."/>
            <person name="Hunter J.L."/>
            <person name="Jenkins J."/>
            <person name="Johnson-Hopson C."/>
            <person name="Khan S."/>
            <person name="Khaykin E."/>
            <person name="Kim C.J."/>
            <person name="Koo H.L."/>
            <person name="Kremenetskaia I."/>
            <person name="Kurtz D.B."/>
            <person name="Kwan A."/>
            <person name="Lam B."/>
            <person name="Langin-Hooper S."/>
            <person name="Lee A."/>
            <person name="Lee J.M."/>
            <person name="Lenz C.A."/>
            <person name="Li J.H."/>
            <person name="Li Y.-P."/>
            <person name="Lin X."/>
            <person name="Liu S.X."/>
            <person name="Liu Z.A."/>
            <person name="Luros J.S."/>
            <person name="Maiti R."/>
            <person name="Marziali A."/>
            <person name="Militscher J."/>
            <person name="Miranda M."/>
            <person name="Nguyen M."/>
            <person name="Nierman W.C."/>
            <person name="Osborne B.I."/>
            <person name="Pai G."/>
            <person name="Peterson J."/>
            <person name="Pham P.K."/>
            <person name="Rizzo M."/>
            <person name="Rooney T."/>
            <person name="Rowley D."/>
            <person name="Sakano H."/>
            <person name="Salzberg S.L."/>
            <person name="Schwartz J.R."/>
            <person name="Shinn P."/>
            <person name="Southwick A.M."/>
            <person name="Sun H."/>
            <person name="Tallon L.J."/>
            <person name="Tambunga G."/>
            <person name="Toriumi M.J."/>
            <person name="Town C.D."/>
            <person name="Utterback T."/>
            <person name="Van Aken S."/>
            <person name="Vaysberg M."/>
            <person name="Vysotskaia V.S."/>
            <person name="Walker M."/>
            <person name="Wu D."/>
            <person name="Yu G."/>
            <person name="Fraser C.M."/>
            <person name="Venter J.C."/>
            <person name="Davis R.W."/>
        </authorList>
    </citation>
    <scope>NUCLEOTIDE SEQUENCE [LARGE SCALE GENOMIC DNA]</scope>
    <source>
        <strain>cv. Columbia</strain>
    </source>
</reference>
<reference key="3">
    <citation type="journal article" date="2017" name="Plant J.">
        <title>Araport11: a complete reannotation of the Arabidopsis thaliana reference genome.</title>
        <authorList>
            <person name="Cheng C.Y."/>
            <person name="Krishnakumar V."/>
            <person name="Chan A.P."/>
            <person name="Thibaud-Nissen F."/>
            <person name="Schobel S."/>
            <person name="Town C.D."/>
        </authorList>
    </citation>
    <scope>GENOME REANNOTATION</scope>
    <source>
        <strain>cv. Columbia</strain>
    </source>
</reference>
<reference key="4">
    <citation type="submission" date="2006-07" db="EMBL/GenBank/DDBJ databases">
        <title>Large-scale analysis of RIKEN Arabidopsis full-length (RAFL) cDNAs.</title>
        <authorList>
            <person name="Totoki Y."/>
            <person name="Seki M."/>
            <person name="Ishida J."/>
            <person name="Nakajima M."/>
            <person name="Enju A."/>
            <person name="Kamiya A."/>
            <person name="Narusaka M."/>
            <person name="Shin-i T."/>
            <person name="Nakagawa M."/>
            <person name="Sakamoto N."/>
            <person name="Oishi K."/>
            <person name="Kohara Y."/>
            <person name="Kobayashi M."/>
            <person name="Toyoda A."/>
            <person name="Sakaki Y."/>
            <person name="Sakurai T."/>
            <person name="Iida K."/>
            <person name="Akiyama K."/>
            <person name="Satou M."/>
            <person name="Toyoda T."/>
            <person name="Konagaya A."/>
            <person name="Carninci P."/>
            <person name="Kawai J."/>
            <person name="Hayashizaki Y."/>
            <person name="Shinozaki K."/>
        </authorList>
    </citation>
    <scope>NUCLEOTIDE SEQUENCE [LARGE SCALE MRNA] (ISOFORM 2)</scope>
    <source>
        <strain>cv. Columbia</strain>
    </source>
</reference>
<accession>Q5MK24</accession>
<accession>Q0WRA1</accession>
<accession>Q9MAN2</accession>
<gene>
    <name evidence="3" type="primary">ARV1</name>
    <name evidence="5" type="ordered locus">At1g01020</name>
    <name evidence="6" type="ORF">T25K16.2</name>
</gene>
<keyword id="KW-0025">Alternative splicing</keyword>
<keyword id="KW-0256">Endoplasmic reticulum</keyword>
<keyword id="KW-0443">Lipid metabolism</keyword>
<keyword id="KW-0445">Lipid transport</keyword>
<keyword id="KW-0472">Membrane</keyword>
<keyword id="KW-1185">Reference proteome</keyword>
<keyword id="KW-0746">Sphingolipid metabolism</keyword>
<keyword id="KW-0812">Transmembrane</keyword>
<keyword id="KW-1133">Transmembrane helix</keyword>
<keyword id="KW-0813">Transport</keyword>
<sequence>MAASEHRCVGCGFRVKSLFIQYSPGNIRLMKCGNCKEVADEYIECERMIIFIDLILHRPKVYRHVLYNAINPATVNIQHLLWKLVFAYLLLDCYRSLLLRKSDEESSFSDSPVLLSIKVLIGVLSANAAFIISFAIATKGLLNEVSRRREIMLGIFISSYFKIFLLAMLVWEFPMSVIFFVDILLLTSNSMALKVMTESTMTRCIAVCLIAHLIRFLVGQIFEPTIFLIQIGSLLQYMSYFFRIV</sequence>
<proteinExistence type="evidence at transcript level"/>
<organism>
    <name type="scientific">Arabidopsis thaliana</name>
    <name type="common">Mouse-ear cress</name>
    <dbReference type="NCBI Taxonomy" id="3702"/>
    <lineage>
        <taxon>Eukaryota</taxon>
        <taxon>Viridiplantae</taxon>
        <taxon>Streptophyta</taxon>
        <taxon>Embryophyta</taxon>
        <taxon>Tracheophyta</taxon>
        <taxon>Spermatophyta</taxon>
        <taxon>Magnoliopsida</taxon>
        <taxon>eudicotyledons</taxon>
        <taxon>Gunneridae</taxon>
        <taxon>Pentapetalae</taxon>
        <taxon>rosids</taxon>
        <taxon>malvids</taxon>
        <taxon>Brassicales</taxon>
        <taxon>Brassicaceae</taxon>
        <taxon>Camelineae</taxon>
        <taxon>Arabidopsis</taxon>
    </lineage>
</organism>
<comment type="function">
    <text evidence="2">Mediator of sterol homeostasis involved in sterol uptake, trafficking and distribution into membranes. Also regulates the sphingolipid metabolism.</text>
</comment>
<comment type="subcellular location">
    <subcellularLocation>
        <location evidence="2">Endoplasmic reticulum membrane</location>
        <topology evidence="1">Multi-pass membrane protein</topology>
    </subcellularLocation>
</comment>
<comment type="alternative products">
    <event type="alternative splicing"/>
    <isoform>
        <id>Q5MK24-1</id>
        <name>1</name>
        <sequence type="displayed"/>
    </isoform>
    <isoform>
        <id>Q5MK24-2</id>
        <name>2</name>
        <sequence type="described" ref="VSP_060101"/>
    </isoform>
</comment>
<comment type="tissue specificity">
    <text evidence="2">Restricted to tissues in which cells are actively dividing or expanding. Mostly expressed in roots and flowers, and, to a lower extent, in stems and leaves.</text>
</comment>
<comment type="developmental stage">
    <text evidence="2">In floral tissues, expressed in pollen grains and fertilized ovules until they develop into seeds, and, at low levels, in the styles. Observed in germinating seedlings, and later confined to shoot and root apical meristems. Accumulates in emerging leaves and in the vascular tissue of adult leaves.</text>
</comment>
<comment type="similarity">
    <text evidence="4">Belongs to the ARV1 family.</text>
</comment>
<comment type="sequence caution" evidence="4">
    <conflict type="erroneous gene model prediction">
        <sequence resource="EMBL-CDS" id="AAF26477"/>
    </conflict>
</comment>
<evidence type="ECO:0000255" key="1"/>
<evidence type="ECO:0000269" key="2">
    <source>
    </source>
</evidence>
<evidence type="ECO:0000303" key="3">
    <source>
    </source>
</evidence>
<evidence type="ECO:0000305" key="4"/>
<evidence type="ECO:0000312" key="5">
    <source>
        <dbReference type="Araport" id="AT1G01020"/>
    </source>
</evidence>
<evidence type="ECO:0000312" key="6">
    <source>
        <dbReference type="EMBL" id="AAF26477.1"/>
    </source>
</evidence>
<dbReference type="EMBL" id="AY758070">
    <property type="protein sequence ID" value="AAV92715.1"/>
    <property type="molecule type" value="mRNA"/>
</dbReference>
<dbReference type="EMBL" id="AC007323">
    <property type="protein sequence ID" value="AAF26477.1"/>
    <property type="status" value="ALT_SEQ"/>
    <property type="molecule type" value="Genomic_DNA"/>
</dbReference>
<dbReference type="EMBL" id="CP002684">
    <property type="protein sequence ID" value="AEE27217.1"/>
    <property type="molecule type" value="Genomic_DNA"/>
</dbReference>
<dbReference type="EMBL" id="CP002684">
    <property type="protein sequence ID" value="ANM59419.1"/>
    <property type="molecule type" value="Genomic_DNA"/>
</dbReference>
<dbReference type="EMBL" id="AK228414">
    <property type="protein sequence ID" value="BAF00348.1"/>
    <property type="molecule type" value="mRNA"/>
</dbReference>
<dbReference type="RefSeq" id="NP_001318899.1">
    <molecule id="Q5MK24-1"/>
    <property type="nucleotide sequence ID" value="NM_001331239.1"/>
</dbReference>
<dbReference type="RefSeq" id="NP_001321776.1">
    <molecule id="Q5MK24-2"/>
    <property type="nucleotide sequence ID" value="NM_001331242.1"/>
</dbReference>
<dbReference type="FunCoup" id="Q5MK24">
    <property type="interactions" value="3257"/>
</dbReference>
<dbReference type="STRING" id="3702.Q5MK24"/>
<dbReference type="PaxDb" id="3702-AT1G01020.1"/>
<dbReference type="ProteomicsDB" id="193607">
    <molecule id="Q5MK24-1"/>
</dbReference>
<dbReference type="DNASU" id="839569"/>
<dbReference type="EnsemblPlants" id="AT1G01020.1">
    <molecule id="Q5MK24-1"/>
    <property type="protein sequence ID" value="AT1G01020.1"/>
    <property type="gene ID" value="AT1G01020"/>
</dbReference>
<dbReference type="EnsemblPlants" id="AT1G01020.5">
    <molecule id="Q5MK24-2"/>
    <property type="protein sequence ID" value="AT1G01020.5"/>
    <property type="gene ID" value="AT1G01020"/>
</dbReference>
<dbReference type="GeneID" id="839569"/>
<dbReference type="Gramene" id="AT1G01020.1">
    <molecule id="Q5MK24-1"/>
    <property type="protein sequence ID" value="AT1G01020.1"/>
    <property type="gene ID" value="AT1G01020"/>
</dbReference>
<dbReference type="Gramene" id="AT1G01020.5">
    <molecule id="Q5MK24-2"/>
    <property type="protein sequence ID" value="AT1G01020.5"/>
    <property type="gene ID" value="AT1G01020"/>
</dbReference>
<dbReference type="KEGG" id="ath:AT1G01020"/>
<dbReference type="Araport" id="AT1G01020"/>
<dbReference type="TAIR" id="AT1G01020">
    <property type="gene designation" value="ARV1"/>
</dbReference>
<dbReference type="eggNOG" id="KOG3134">
    <property type="taxonomic scope" value="Eukaryota"/>
</dbReference>
<dbReference type="HOGENOM" id="CLU_057366_1_0_1"/>
<dbReference type="InParanoid" id="Q5MK24"/>
<dbReference type="OMA" id="KLYWKVS"/>
<dbReference type="PhylomeDB" id="Q5MK24"/>
<dbReference type="PRO" id="PR:Q5MK24"/>
<dbReference type="Proteomes" id="UP000006548">
    <property type="component" value="Chromosome 1"/>
</dbReference>
<dbReference type="ExpressionAtlas" id="Q5MK24">
    <property type="expression patterns" value="baseline and differential"/>
</dbReference>
<dbReference type="GO" id="GO:0005783">
    <property type="term" value="C:endoplasmic reticulum"/>
    <property type="evidence" value="ECO:0000314"/>
    <property type="project" value="TAIR"/>
</dbReference>
<dbReference type="GO" id="GO:0005789">
    <property type="term" value="C:endoplasmic reticulum membrane"/>
    <property type="evidence" value="ECO:0007669"/>
    <property type="project" value="UniProtKB-SubCell"/>
</dbReference>
<dbReference type="GO" id="GO:0032366">
    <property type="term" value="P:intracellular sterol transport"/>
    <property type="evidence" value="ECO:0007669"/>
    <property type="project" value="InterPro"/>
</dbReference>
<dbReference type="GO" id="GO:0006665">
    <property type="term" value="P:sphingolipid metabolic process"/>
    <property type="evidence" value="ECO:0000315"/>
    <property type="project" value="TAIR"/>
</dbReference>
<dbReference type="GO" id="GO:0016125">
    <property type="term" value="P:sterol metabolic process"/>
    <property type="evidence" value="ECO:0000315"/>
    <property type="project" value="TAIR"/>
</dbReference>
<dbReference type="InterPro" id="IPR007290">
    <property type="entry name" value="Arv1"/>
</dbReference>
<dbReference type="PANTHER" id="PTHR14467">
    <property type="entry name" value="ARV1"/>
    <property type="match status" value="1"/>
</dbReference>
<dbReference type="PANTHER" id="PTHR14467:SF0">
    <property type="entry name" value="PROTEIN ARV1"/>
    <property type="match status" value="1"/>
</dbReference>
<dbReference type="Pfam" id="PF04161">
    <property type="entry name" value="Arv1"/>
    <property type="match status" value="1"/>
</dbReference>
<protein>
    <recommendedName>
        <fullName evidence="3">Protein ARV 1</fullName>
        <shortName evidence="3">AtArv1p</shortName>
    </recommendedName>
</protein>
<feature type="chain" id="PRO_0000446891" description="Protein ARV 1">
    <location>
        <begin position="1"/>
        <end position="245"/>
    </location>
</feature>
<feature type="transmembrane region" description="Helical" evidence="1">
    <location>
        <begin position="70"/>
        <end position="90"/>
    </location>
</feature>
<feature type="transmembrane region" description="Helical" evidence="1">
    <location>
        <begin position="117"/>
        <end position="137"/>
    </location>
</feature>
<feature type="transmembrane region" description="Helical" evidence="1">
    <location>
        <begin position="163"/>
        <end position="183"/>
    </location>
</feature>
<feature type="transmembrane region" description="Helical" evidence="1">
    <location>
        <begin position="200"/>
        <end position="220"/>
    </location>
</feature>
<feature type="transmembrane region" description="Helical" evidence="1">
    <location>
        <begin position="224"/>
        <end position="244"/>
    </location>
</feature>
<feature type="splice variant" id="VSP_060101" description="In isoform 2.">
    <location>
        <begin position="1"/>
        <end position="47"/>
    </location>
</feature>